<comment type="function">
    <text evidence="1">Involved in the biosynthesis of lipid A, a phosphorylated glycolipid that anchors the lipopolysaccharide to the outer membrane of the cell.</text>
</comment>
<comment type="catalytic activity">
    <reaction evidence="1">
        <text>a (3R)-hydroxyacyl-[ACP] + UDP-N-acetyl-alpha-D-glucosamine = a UDP-3-O-[(3R)-3-hydroxyacyl]-N-acetyl-alpha-D-glucosamine + holo-[ACP]</text>
        <dbReference type="Rhea" id="RHEA:67812"/>
        <dbReference type="Rhea" id="RHEA-COMP:9685"/>
        <dbReference type="Rhea" id="RHEA-COMP:9945"/>
        <dbReference type="ChEBI" id="CHEBI:57705"/>
        <dbReference type="ChEBI" id="CHEBI:64479"/>
        <dbReference type="ChEBI" id="CHEBI:78827"/>
        <dbReference type="ChEBI" id="CHEBI:173225"/>
        <dbReference type="EC" id="2.3.1.129"/>
    </reaction>
</comment>
<comment type="pathway">
    <text evidence="1">Glycolipid biosynthesis; lipid IV(A) biosynthesis; lipid IV(A) from (3R)-3-hydroxytetradecanoyl-[acyl-carrier-protein] and UDP-N-acetyl-alpha-D-glucosamine: step 1/6.</text>
</comment>
<comment type="subunit">
    <text evidence="1">Homotrimer.</text>
</comment>
<comment type="subcellular location">
    <subcellularLocation>
        <location evidence="1">Cytoplasm</location>
    </subcellularLocation>
</comment>
<comment type="similarity">
    <text evidence="1">Belongs to the transferase hexapeptide repeat family. LpxA subfamily.</text>
</comment>
<dbReference type="EC" id="2.3.1.129" evidence="1"/>
<dbReference type="EMBL" id="CP001043">
    <property type="protein sequence ID" value="ACC70508.1"/>
    <property type="molecule type" value="Genomic_DNA"/>
</dbReference>
<dbReference type="RefSeq" id="WP_012400722.1">
    <property type="nucleotide sequence ID" value="NC_010622.1"/>
</dbReference>
<dbReference type="SMR" id="B2JIB4"/>
<dbReference type="STRING" id="391038.Bphy_1326"/>
<dbReference type="KEGG" id="bph:Bphy_1326"/>
<dbReference type="eggNOG" id="COG1043">
    <property type="taxonomic scope" value="Bacteria"/>
</dbReference>
<dbReference type="HOGENOM" id="CLU_061249_0_0_4"/>
<dbReference type="OrthoDB" id="9807278at2"/>
<dbReference type="UniPathway" id="UPA00359">
    <property type="reaction ID" value="UER00477"/>
</dbReference>
<dbReference type="Proteomes" id="UP000001192">
    <property type="component" value="Chromosome 1"/>
</dbReference>
<dbReference type="GO" id="GO:0005737">
    <property type="term" value="C:cytoplasm"/>
    <property type="evidence" value="ECO:0007669"/>
    <property type="project" value="UniProtKB-SubCell"/>
</dbReference>
<dbReference type="GO" id="GO:0016020">
    <property type="term" value="C:membrane"/>
    <property type="evidence" value="ECO:0007669"/>
    <property type="project" value="GOC"/>
</dbReference>
<dbReference type="GO" id="GO:0008780">
    <property type="term" value="F:acyl-[acyl-carrier-protein]-UDP-N-acetylglucosamine O-acyltransferase activity"/>
    <property type="evidence" value="ECO:0007669"/>
    <property type="project" value="UniProtKB-UniRule"/>
</dbReference>
<dbReference type="GO" id="GO:0009245">
    <property type="term" value="P:lipid A biosynthetic process"/>
    <property type="evidence" value="ECO:0007669"/>
    <property type="project" value="UniProtKB-UniRule"/>
</dbReference>
<dbReference type="CDD" id="cd03351">
    <property type="entry name" value="LbH_UDP-GlcNAc_AT"/>
    <property type="match status" value="1"/>
</dbReference>
<dbReference type="Gene3D" id="2.160.10.10">
    <property type="entry name" value="Hexapeptide repeat proteins"/>
    <property type="match status" value="1"/>
</dbReference>
<dbReference type="Gene3D" id="1.20.1180.10">
    <property type="entry name" value="Udp N-acetylglucosamine O-acyltransferase, C-terminal domain"/>
    <property type="match status" value="1"/>
</dbReference>
<dbReference type="HAMAP" id="MF_00387">
    <property type="entry name" value="LpxA"/>
    <property type="match status" value="1"/>
</dbReference>
<dbReference type="InterPro" id="IPR029098">
    <property type="entry name" value="Acetyltransf_C"/>
</dbReference>
<dbReference type="InterPro" id="IPR037157">
    <property type="entry name" value="Acetyltransf_C_sf"/>
</dbReference>
<dbReference type="InterPro" id="IPR001451">
    <property type="entry name" value="Hexapep"/>
</dbReference>
<dbReference type="InterPro" id="IPR010137">
    <property type="entry name" value="Lipid_A_LpxA"/>
</dbReference>
<dbReference type="InterPro" id="IPR011004">
    <property type="entry name" value="Trimer_LpxA-like_sf"/>
</dbReference>
<dbReference type="NCBIfam" id="TIGR01852">
    <property type="entry name" value="lipid_A_lpxA"/>
    <property type="match status" value="1"/>
</dbReference>
<dbReference type="NCBIfam" id="NF003657">
    <property type="entry name" value="PRK05289.1"/>
    <property type="match status" value="1"/>
</dbReference>
<dbReference type="PANTHER" id="PTHR43480">
    <property type="entry name" value="ACYL-[ACYL-CARRIER-PROTEIN]--UDP-N-ACETYLGLUCOSAMINE O-ACYLTRANSFERASE"/>
    <property type="match status" value="1"/>
</dbReference>
<dbReference type="PANTHER" id="PTHR43480:SF1">
    <property type="entry name" value="ACYL-[ACYL-CARRIER-PROTEIN]--UDP-N-ACETYLGLUCOSAMINE O-ACYLTRANSFERASE, MITOCHONDRIAL-RELATED"/>
    <property type="match status" value="1"/>
</dbReference>
<dbReference type="Pfam" id="PF13720">
    <property type="entry name" value="Acetyltransf_11"/>
    <property type="match status" value="1"/>
</dbReference>
<dbReference type="Pfam" id="PF00132">
    <property type="entry name" value="Hexapep"/>
    <property type="match status" value="2"/>
</dbReference>
<dbReference type="PIRSF" id="PIRSF000456">
    <property type="entry name" value="UDP-GlcNAc_acltr"/>
    <property type="match status" value="1"/>
</dbReference>
<dbReference type="SUPFAM" id="SSF51161">
    <property type="entry name" value="Trimeric LpxA-like enzymes"/>
    <property type="match status" value="1"/>
</dbReference>
<dbReference type="PROSITE" id="PS00101">
    <property type="entry name" value="HEXAPEP_TRANSFERASES"/>
    <property type="match status" value="1"/>
</dbReference>
<sequence>MSRIHPTAIIESGAQLDESVEIGPYAIVGANVTIGARTTIGSHSVIEGHTTIGEDNRIGHYASVGGRPQDMKYRDEPTKLVIGSRNTIREFTTIHTGTVQDKGITTLGDDNWIMAYVHIGHDCQIGSNVILSSNAQMAGHVIVGDHAIVGGMSGVHQFVRIGAHSMLGGASALVQDIPPFVIAAGNKAEPHGINVEGLRRRGFSADAISALRSAYRLLYKNGLSLEDAKVQLRELAAAGGDGDEPVRALVDFVEQSQRGIIR</sequence>
<gene>
    <name evidence="1" type="primary">lpxA</name>
    <name type="ordered locus">Bphy_1326</name>
</gene>
<accession>B2JIB4</accession>
<protein>
    <recommendedName>
        <fullName evidence="1">Acyl-[acyl-carrier-protein]--UDP-N-acetylglucosamine O-acyltransferase</fullName>
        <shortName evidence="1">UDP-N-acetylglucosamine acyltransferase</shortName>
        <ecNumber evidence="1">2.3.1.129</ecNumber>
    </recommendedName>
</protein>
<organism>
    <name type="scientific">Paraburkholderia phymatum (strain DSM 17167 / CIP 108236 / LMG 21445 / STM815)</name>
    <name type="common">Burkholderia phymatum</name>
    <dbReference type="NCBI Taxonomy" id="391038"/>
    <lineage>
        <taxon>Bacteria</taxon>
        <taxon>Pseudomonadati</taxon>
        <taxon>Pseudomonadota</taxon>
        <taxon>Betaproteobacteria</taxon>
        <taxon>Burkholderiales</taxon>
        <taxon>Burkholderiaceae</taxon>
        <taxon>Paraburkholderia</taxon>
    </lineage>
</organism>
<proteinExistence type="inferred from homology"/>
<name>LPXA_PARP8</name>
<feature type="chain" id="PRO_1000122691" description="Acyl-[acyl-carrier-protein]--UDP-N-acetylglucosamine O-acyltransferase">
    <location>
        <begin position="1"/>
        <end position="262"/>
    </location>
</feature>
<keyword id="KW-0012">Acyltransferase</keyword>
<keyword id="KW-0963">Cytoplasm</keyword>
<keyword id="KW-0441">Lipid A biosynthesis</keyword>
<keyword id="KW-0444">Lipid biosynthesis</keyword>
<keyword id="KW-0443">Lipid metabolism</keyword>
<keyword id="KW-1185">Reference proteome</keyword>
<keyword id="KW-0677">Repeat</keyword>
<keyword id="KW-0808">Transferase</keyword>
<evidence type="ECO:0000255" key="1">
    <source>
        <dbReference type="HAMAP-Rule" id="MF_00387"/>
    </source>
</evidence>
<reference key="1">
    <citation type="journal article" date="2014" name="Stand. Genomic Sci.">
        <title>Complete genome sequence of Burkholderia phymatum STM815(T), a broad host range and efficient nitrogen-fixing symbiont of Mimosa species.</title>
        <authorList>
            <person name="Moulin L."/>
            <person name="Klonowska A."/>
            <person name="Caroline B."/>
            <person name="Booth K."/>
            <person name="Vriezen J.A."/>
            <person name="Melkonian R."/>
            <person name="James E.K."/>
            <person name="Young J.P."/>
            <person name="Bena G."/>
            <person name="Hauser L."/>
            <person name="Land M."/>
            <person name="Kyrpides N."/>
            <person name="Bruce D."/>
            <person name="Chain P."/>
            <person name="Copeland A."/>
            <person name="Pitluck S."/>
            <person name="Woyke T."/>
            <person name="Lizotte-Waniewski M."/>
            <person name="Bristow J."/>
            <person name="Riley M."/>
        </authorList>
    </citation>
    <scope>NUCLEOTIDE SEQUENCE [LARGE SCALE GENOMIC DNA]</scope>
    <source>
        <strain>DSM 17167 / CIP 108236 / LMG 21445 / STM815</strain>
    </source>
</reference>